<keyword id="KW-0119">Carbohydrate metabolism</keyword>
<keyword id="KW-0456">Lyase</keyword>
<keyword id="KW-1185">Reference proteome</keyword>
<name>MURQ_LEVBA</name>
<proteinExistence type="inferred from homology"/>
<protein>
    <recommendedName>
        <fullName evidence="1">N-acetylmuramic acid 6-phosphate etherase</fullName>
        <shortName evidence="1">MurNAc-6-P etherase</shortName>
        <ecNumber evidence="1">4.2.1.126</ecNumber>
    </recommendedName>
    <alternativeName>
        <fullName evidence="1">N-acetylmuramic acid 6-phosphate hydrolase</fullName>
    </alternativeName>
    <alternativeName>
        <fullName evidence="1">N-acetylmuramic acid 6-phosphate lyase</fullName>
    </alternativeName>
</protein>
<comment type="function">
    <text evidence="1">Specifically catalyzes the cleavage of the D-lactyl ether substituent of MurNAc 6-phosphate, producing GlcNAc 6-phosphate and D-lactate.</text>
</comment>
<comment type="catalytic activity">
    <reaction evidence="1">
        <text>N-acetyl-D-muramate 6-phosphate + H2O = N-acetyl-D-glucosamine 6-phosphate + (R)-lactate</text>
        <dbReference type="Rhea" id="RHEA:26410"/>
        <dbReference type="ChEBI" id="CHEBI:15377"/>
        <dbReference type="ChEBI" id="CHEBI:16004"/>
        <dbReference type="ChEBI" id="CHEBI:57513"/>
        <dbReference type="ChEBI" id="CHEBI:58722"/>
        <dbReference type="EC" id="4.2.1.126"/>
    </reaction>
</comment>
<comment type="pathway">
    <text evidence="1">Amino-sugar metabolism; N-acetylmuramate degradation.</text>
</comment>
<comment type="subunit">
    <text evidence="1">Homodimer.</text>
</comment>
<comment type="miscellaneous">
    <text evidence="1">A lyase-type mechanism (elimination/hydration) is suggested for the cleavage of the lactyl ether bond of MurNAc 6-phosphate, with the formation of an alpha,beta-unsaturated aldehyde intermediate with (E)-stereochemistry, followed by the syn addition of water to give product.</text>
</comment>
<comment type="similarity">
    <text evidence="1">Belongs to the GCKR-like family. MurNAc-6-P etherase subfamily.</text>
</comment>
<gene>
    <name evidence="1" type="primary">murQ</name>
    <name type="ordered locus">LVIS_1424</name>
</gene>
<accession>Q03QK0</accession>
<organism>
    <name type="scientific">Levilactobacillus brevis (strain ATCC 367 / BCRC 12310 / CIP 105137 / JCM 1170 / LMG 11437 / NCIMB 947 / NCTC 947)</name>
    <name type="common">Lactobacillus brevis</name>
    <dbReference type="NCBI Taxonomy" id="387344"/>
    <lineage>
        <taxon>Bacteria</taxon>
        <taxon>Bacillati</taxon>
        <taxon>Bacillota</taxon>
        <taxon>Bacilli</taxon>
        <taxon>Lactobacillales</taxon>
        <taxon>Lactobacillaceae</taxon>
        <taxon>Levilactobacillus</taxon>
    </lineage>
</organism>
<evidence type="ECO:0000255" key="1">
    <source>
        <dbReference type="HAMAP-Rule" id="MF_00068"/>
    </source>
</evidence>
<sequence>MQFDELLTEQRNHRSTHIDRESTLEMVATINREDHRVARAVQKELPQIAAAIDAAYPKFDQGGRLIYVGAGTSGRLGVMDATEIQPTYGLTAEQTFGLIAGGEPALTHTVKAAEDSIELAQEDLAAVQLTAQDIVVASAASGQTPYTLAALQYAQEKGALGIGFSCVEDSPLAQLANYPITPVVGPEVITGATLLKAGTAEKMVLNMLSTGIMVKSGKVYQNLMINVVPTNGKTFERAKKIIAEATQTSLLAAERALERANNHVPLAIVLIETKGTIAEAKALLAATNGHVSQAVKLNDKQH</sequence>
<feature type="chain" id="PRO_1000009120" description="N-acetylmuramic acid 6-phosphate etherase">
    <location>
        <begin position="1"/>
        <end position="302"/>
    </location>
</feature>
<feature type="domain" description="SIS" evidence="1">
    <location>
        <begin position="55"/>
        <end position="218"/>
    </location>
</feature>
<feature type="active site" description="Proton donor" evidence="1">
    <location>
        <position position="83"/>
    </location>
</feature>
<feature type="active site" evidence="1">
    <location>
        <position position="114"/>
    </location>
</feature>
<reference key="1">
    <citation type="journal article" date="2006" name="Proc. Natl. Acad. Sci. U.S.A.">
        <title>Comparative genomics of the lactic acid bacteria.</title>
        <authorList>
            <person name="Makarova K.S."/>
            <person name="Slesarev A."/>
            <person name="Wolf Y.I."/>
            <person name="Sorokin A."/>
            <person name="Mirkin B."/>
            <person name="Koonin E.V."/>
            <person name="Pavlov A."/>
            <person name="Pavlova N."/>
            <person name="Karamychev V."/>
            <person name="Polouchine N."/>
            <person name="Shakhova V."/>
            <person name="Grigoriev I."/>
            <person name="Lou Y."/>
            <person name="Rohksar D."/>
            <person name="Lucas S."/>
            <person name="Huang K."/>
            <person name="Goodstein D.M."/>
            <person name="Hawkins T."/>
            <person name="Plengvidhya V."/>
            <person name="Welker D."/>
            <person name="Hughes J."/>
            <person name="Goh Y."/>
            <person name="Benson A."/>
            <person name="Baldwin K."/>
            <person name="Lee J.-H."/>
            <person name="Diaz-Muniz I."/>
            <person name="Dosti B."/>
            <person name="Smeianov V."/>
            <person name="Wechter W."/>
            <person name="Barabote R."/>
            <person name="Lorca G."/>
            <person name="Altermann E."/>
            <person name="Barrangou R."/>
            <person name="Ganesan B."/>
            <person name="Xie Y."/>
            <person name="Rawsthorne H."/>
            <person name="Tamir D."/>
            <person name="Parker C."/>
            <person name="Breidt F."/>
            <person name="Broadbent J.R."/>
            <person name="Hutkins R."/>
            <person name="O'Sullivan D."/>
            <person name="Steele J."/>
            <person name="Unlu G."/>
            <person name="Saier M.H. Jr."/>
            <person name="Klaenhammer T."/>
            <person name="Richardson P."/>
            <person name="Kozyavkin S."/>
            <person name="Weimer B.C."/>
            <person name="Mills D.A."/>
        </authorList>
    </citation>
    <scope>NUCLEOTIDE SEQUENCE [LARGE SCALE GENOMIC DNA]</scope>
    <source>
        <strain>ATCC 367 / BCRC 12310 / CIP 105137 / JCM 1170 / LMG 11437 / NCIMB 947 / NCTC 947</strain>
    </source>
</reference>
<dbReference type="EC" id="4.2.1.126" evidence="1"/>
<dbReference type="EMBL" id="CP000416">
    <property type="protein sequence ID" value="ABJ64522.1"/>
    <property type="molecule type" value="Genomic_DNA"/>
</dbReference>
<dbReference type="SMR" id="Q03QK0"/>
<dbReference type="STRING" id="387344.LVIS_1424"/>
<dbReference type="KEGG" id="lbr:LVIS_1424"/>
<dbReference type="PATRIC" id="fig|387344.15.peg.1361"/>
<dbReference type="eggNOG" id="COG2103">
    <property type="taxonomic scope" value="Bacteria"/>
</dbReference>
<dbReference type="HOGENOM" id="CLU_049049_1_1_9"/>
<dbReference type="UniPathway" id="UPA00342"/>
<dbReference type="Proteomes" id="UP000001652">
    <property type="component" value="Chromosome"/>
</dbReference>
<dbReference type="GO" id="GO:0097367">
    <property type="term" value="F:carbohydrate derivative binding"/>
    <property type="evidence" value="ECO:0007669"/>
    <property type="project" value="InterPro"/>
</dbReference>
<dbReference type="GO" id="GO:0016835">
    <property type="term" value="F:carbon-oxygen lyase activity"/>
    <property type="evidence" value="ECO:0007669"/>
    <property type="project" value="UniProtKB-UniRule"/>
</dbReference>
<dbReference type="GO" id="GO:0016803">
    <property type="term" value="F:ether hydrolase activity"/>
    <property type="evidence" value="ECO:0007669"/>
    <property type="project" value="TreeGrafter"/>
</dbReference>
<dbReference type="GO" id="GO:0046348">
    <property type="term" value="P:amino sugar catabolic process"/>
    <property type="evidence" value="ECO:0007669"/>
    <property type="project" value="InterPro"/>
</dbReference>
<dbReference type="GO" id="GO:0097173">
    <property type="term" value="P:N-acetylmuramic acid catabolic process"/>
    <property type="evidence" value="ECO:0007669"/>
    <property type="project" value="UniProtKB-UniPathway"/>
</dbReference>
<dbReference type="GO" id="GO:0009254">
    <property type="term" value="P:peptidoglycan turnover"/>
    <property type="evidence" value="ECO:0007669"/>
    <property type="project" value="TreeGrafter"/>
</dbReference>
<dbReference type="CDD" id="cd05007">
    <property type="entry name" value="SIS_Etherase"/>
    <property type="match status" value="1"/>
</dbReference>
<dbReference type="FunFam" id="3.40.50.10490:FF:000014">
    <property type="entry name" value="N-acetylmuramic acid 6-phosphate etherase"/>
    <property type="match status" value="1"/>
</dbReference>
<dbReference type="Gene3D" id="1.10.8.1080">
    <property type="match status" value="1"/>
</dbReference>
<dbReference type="Gene3D" id="3.40.50.10490">
    <property type="entry name" value="Glucose-6-phosphate isomerase like protein, domain 1"/>
    <property type="match status" value="1"/>
</dbReference>
<dbReference type="HAMAP" id="MF_00068">
    <property type="entry name" value="MurQ"/>
    <property type="match status" value="1"/>
</dbReference>
<dbReference type="InterPro" id="IPR005488">
    <property type="entry name" value="Etherase_MurQ"/>
</dbReference>
<dbReference type="InterPro" id="IPR040190">
    <property type="entry name" value="MURQ/GCKR"/>
</dbReference>
<dbReference type="InterPro" id="IPR001347">
    <property type="entry name" value="SIS_dom"/>
</dbReference>
<dbReference type="InterPro" id="IPR046348">
    <property type="entry name" value="SIS_dom_sf"/>
</dbReference>
<dbReference type="NCBIfam" id="TIGR00274">
    <property type="entry name" value="N-acetylmuramic acid 6-phosphate etherase"/>
    <property type="match status" value="1"/>
</dbReference>
<dbReference type="NCBIfam" id="NF003915">
    <property type="entry name" value="PRK05441.1"/>
    <property type="match status" value="1"/>
</dbReference>
<dbReference type="NCBIfam" id="NF009222">
    <property type="entry name" value="PRK12570.1"/>
    <property type="match status" value="1"/>
</dbReference>
<dbReference type="PANTHER" id="PTHR10088">
    <property type="entry name" value="GLUCOKINASE REGULATORY PROTEIN"/>
    <property type="match status" value="1"/>
</dbReference>
<dbReference type="PANTHER" id="PTHR10088:SF4">
    <property type="entry name" value="GLUCOKINASE REGULATORY PROTEIN"/>
    <property type="match status" value="1"/>
</dbReference>
<dbReference type="Pfam" id="PF22645">
    <property type="entry name" value="GKRP_SIS_N"/>
    <property type="match status" value="1"/>
</dbReference>
<dbReference type="SUPFAM" id="SSF53697">
    <property type="entry name" value="SIS domain"/>
    <property type="match status" value="1"/>
</dbReference>
<dbReference type="PROSITE" id="PS51464">
    <property type="entry name" value="SIS"/>
    <property type="match status" value="1"/>
</dbReference>